<organism>
    <name type="scientific">Methanococcus voltae</name>
    <dbReference type="NCBI Taxonomy" id="2188"/>
    <lineage>
        <taxon>Archaea</taxon>
        <taxon>Methanobacteriati</taxon>
        <taxon>Methanobacteriota</taxon>
        <taxon>Methanomada group</taxon>
        <taxon>Methanococci</taxon>
        <taxon>Methanococcales</taxon>
        <taxon>Methanococcaceae</taxon>
        <taxon>Methanococcus</taxon>
    </lineage>
</organism>
<protein>
    <recommendedName>
        <fullName>Methyl-coenzyme M reductase subunit beta</fullName>
        <ecNumber evidence="1">2.8.4.1</ecNumber>
    </recommendedName>
    <alternativeName>
        <fullName>Coenzyme-B sulfoethylthiotransferase beta</fullName>
    </alternativeName>
</protein>
<accession>P11561</accession>
<gene>
    <name type="primary">mcrB</name>
</gene>
<feature type="chain" id="PRO_0000147472" description="Methyl-coenzyme M reductase subunit beta">
    <location>
        <begin position="1"/>
        <end position="443"/>
    </location>
</feature>
<feature type="binding site" evidence="1">
    <location>
        <position position="367"/>
    </location>
    <ligand>
        <name>coenzyme M</name>
        <dbReference type="ChEBI" id="CHEBI:58319"/>
    </ligand>
</feature>
<feature type="binding site" evidence="1">
    <location>
        <position position="369"/>
    </location>
    <ligand>
        <name>coenzyme B</name>
        <dbReference type="ChEBI" id="CHEBI:58596"/>
    </ligand>
</feature>
<dbReference type="EC" id="2.8.4.1" evidence="1"/>
<dbReference type="EMBL" id="X07793">
    <property type="protein sequence ID" value="CAA30630.1"/>
    <property type="molecule type" value="Genomic_DNA"/>
</dbReference>
<dbReference type="PIR" id="S03257">
    <property type="entry name" value="S03257"/>
</dbReference>
<dbReference type="SMR" id="P11561"/>
<dbReference type="UniPathway" id="UPA00646">
    <property type="reaction ID" value="UER00699"/>
</dbReference>
<dbReference type="GO" id="GO:0005737">
    <property type="term" value="C:cytoplasm"/>
    <property type="evidence" value="ECO:0007669"/>
    <property type="project" value="UniProtKB-SubCell"/>
</dbReference>
<dbReference type="GO" id="GO:0050524">
    <property type="term" value="F:coenzyme-B sulfoethylthiotransferase activity"/>
    <property type="evidence" value="ECO:0007669"/>
    <property type="project" value="UniProtKB-EC"/>
</dbReference>
<dbReference type="GO" id="GO:0015948">
    <property type="term" value="P:methanogenesis"/>
    <property type="evidence" value="ECO:0007669"/>
    <property type="project" value="UniProtKB-KW"/>
</dbReference>
<dbReference type="Gene3D" id="3.30.70.470">
    <property type="match status" value="1"/>
</dbReference>
<dbReference type="Gene3D" id="1.20.840.10">
    <property type="entry name" value="Methyl-coenzyme M reductase, alpha/beta subunit, C-terminal"/>
    <property type="match status" value="1"/>
</dbReference>
<dbReference type="InterPro" id="IPR008924">
    <property type="entry name" value="Me_CoM_Rdtase_asu/bsu_C"/>
</dbReference>
<dbReference type="InterPro" id="IPR015823">
    <property type="entry name" value="Me_CoM_Rdtase_asu_N_sub2"/>
</dbReference>
<dbReference type="InterPro" id="IPR003179">
    <property type="entry name" value="Me_CoM_Rdtase_bsu"/>
</dbReference>
<dbReference type="InterPro" id="IPR022679">
    <property type="entry name" value="Me_CoM_Rdtase_bsu_C"/>
</dbReference>
<dbReference type="InterPro" id="IPR022680">
    <property type="entry name" value="Me_CoM_Rdtase_bsu_N"/>
</dbReference>
<dbReference type="InterPro" id="IPR009024">
    <property type="entry name" value="Me_CoM_Rdtase_Fd-like_fold"/>
</dbReference>
<dbReference type="NCBIfam" id="TIGR03257">
    <property type="entry name" value="met_CoM_red_bet"/>
    <property type="match status" value="1"/>
</dbReference>
<dbReference type="Pfam" id="PF02241">
    <property type="entry name" value="MCR_beta"/>
    <property type="match status" value="1"/>
</dbReference>
<dbReference type="Pfam" id="PF02783">
    <property type="entry name" value="MCR_beta_N"/>
    <property type="match status" value="1"/>
</dbReference>
<dbReference type="PIRSF" id="PIRSF000263">
    <property type="entry name" value="Meth_CoM_rd_beta"/>
    <property type="match status" value="1"/>
</dbReference>
<dbReference type="SUPFAM" id="SSF48081">
    <property type="entry name" value="Methyl-coenzyme M reductase alpha and beta chain C-terminal domain"/>
    <property type="match status" value="1"/>
</dbReference>
<dbReference type="SUPFAM" id="SSF55088">
    <property type="entry name" value="Methyl-coenzyme M reductase subunits"/>
    <property type="match status" value="1"/>
</dbReference>
<reference key="1">
    <citation type="journal article" date="1988" name="Mol. Gen. Genet.">
        <title>Comparative analysis of genes encoding methyl coenzyme M reductase in methanogenic bacteria.</title>
        <authorList>
            <person name="Klein A."/>
            <person name="Allmansberger R."/>
            <person name="Bokranz M."/>
            <person name="Knaub S."/>
            <person name="Mueller B."/>
            <person name="Muth E."/>
        </authorList>
    </citation>
    <scope>NUCLEOTIDE SEQUENCE [GENOMIC DNA]</scope>
    <source>
        <strain>ATCC 33273 / DSM 1537 / NBRC 100457 / OCM 70 / PS</strain>
    </source>
</reference>
<proteinExistence type="inferred from homology"/>
<name>MCRB_METVO</name>
<evidence type="ECO:0000250" key="1">
    <source>
        <dbReference type="UniProtKB" id="P11560"/>
    </source>
</evidence>
<evidence type="ECO:0000305" key="2"/>
<comment type="function">
    <text evidence="1">Component of the methyl-coenzyme M reductase (MCR) I that catalyzes the reductive cleavage of methyl-coenzyme M (CoM-S-CH3 or 2-(methylthio)ethanesulfonate) using coenzyme B (CoB or 7-mercaptoheptanoylthreonine phosphate) as reductant which results in the production of methane and the mixed heterodisulfide of CoB and CoM (CoM-S-S-CoB). This is the final step in methanogenesis.</text>
</comment>
<comment type="catalytic activity">
    <reaction evidence="1">
        <text>coenzyme B + methyl-coenzyme M = methane + coenzyme M-coenzyme B heterodisulfide</text>
        <dbReference type="Rhea" id="RHEA:12532"/>
        <dbReference type="ChEBI" id="CHEBI:16183"/>
        <dbReference type="ChEBI" id="CHEBI:58286"/>
        <dbReference type="ChEBI" id="CHEBI:58411"/>
        <dbReference type="ChEBI" id="CHEBI:58596"/>
        <dbReference type="EC" id="2.8.4.1"/>
    </reaction>
    <physiologicalReaction direction="left-to-right" evidence="1">
        <dbReference type="Rhea" id="RHEA:12533"/>
    </physiologicalReaction>
</comment>
<comment type="cofactor">
    <cofactor evidence="1">
        <name>coenzyme F430</name>
        <dbReference type="ChEBI" id="CHEBI:60540"/>
    </cofactor>
    <text evidence="1">Binds 2 coenzyme F430 non-covalently per MCR complex. Coenzyme F430 is a yellow nickel porphinoid. Methyl-coenzyme-M reductase is activated when the enzyme-bound coenzyme F430 is reduced to the Ni(I) oxidation state.</text>
</comment>
<comment type="pathway">
    <text evidence="1">One-carbon metabolism; methyl-coenzyme M reduction; methane from methyl-coenzyme M: step 1/1.</text>
</comment>
<comment type="subunit">
    <text evidence="1">MCR is a hexamer of two alpha, two beta, and two gamma chains, forming a dimer of heterotrimers.</text>
</comment>
<comment type="subcellular location">
    <subcellularLocation>
        <location evidence="1">Cytoplasm</location>
    </subcellularLocation>
</comment>
<comment type="similarity">
    <text evidence="2">Belongs to the methyl-coenzyme M reductase beta subunit family.</text>
</comment>
<sequence length="443" mass="46681">MVKYEDKICLFDAKGNQVAEDVPLEAISPLNNPTIMGMVKNIKRTVAVNLAGIEESLAKGKIGGKGCQVPGTNIELDVIGDAEAIADKVKSILQVSAGDDTEVKLINGGKQMAEQVPSKRLDVAAEYSVSMLSTGMALKEALITNFNIDMFDGSTVHSAIMGQYPQDMDYAGGNIASLLGAPSKLEGLGYALRNIPVNHAVATTKKSLMNAIAFSSILEQTAMFEMGDAVGSFERQHLLGLAYQGLNADNLVVELVKANATGTVGSVVNSIVEKAIADGVIVVDKTLGSGFNMYKPADVNKWNAYAAAGLVAAVMVSCGAARAAQNVASTILYYNDILEYETGLPGVDYGRSMGTAVGFSFFSHSIYGGGGPGIFNGNHVVTRHSKGFAIPPVCAAMCMDAGTQMFSPEKTSALVGTVYSAFDEFREPLKYVIEGALEVQNKL</sequence>
<keyword id="KW-0963">Cytoplasm</keyword>
<keyword id="KW-0484">Methanogenesis</keyword>
<keyword id="KW-0808">Transferase</keyword>